<evidence type="ECO:0000255" key="1">
    <source>
        <dbReference type="HAMAP-Rule" id="MF_00600"/>
    </source>
</evidence>
<name>CH60_AGARV</name>
<keyword id="KW-0067">ATP-binding</keyword>
<keyword id="KW-0143">Chaperone</keyword>
<keyword id="KW-0963">Cytoplasm</keyword>
<keyword id="KW-0413">Isomerase</keyword>
<keyword id="KW-0547">Nucleotide-binding</keyword>
<dbReference type="EC" id="5.6.1.7" evidence="1"/>
<dbReference type="EMBL" id="CP001107">
    <property type="protein sequence ID" value="ACR76009.1"/>
    <property type="molecule type" value="Genomic_DNA"/>
</dbReference>
<dbReference type="RefSeq" id="WP_012743104.1">
    <property type="nucleotide sequence ID" value="NC_012781.1"/>
</dbReference>
<dbReference type="SMR" id="C4ZD46"/>
<dbReference type="STRING" id="515619.EUBREC_2270"/>
<dbReference type="PaxDb" id="515619-EUBREC_2270"/>
<dbReference type="GeneID" id="86989042"/>
<dbReference type="KEGG" id="ere:EUBREC_2270"/>
<dbReference type="HOGENOM" id="CLU_016503_3_0_9"/>
<dbReference type="Proteomes" id="UP000001477">
    <property type="component" value="Chromosome"/>
</dbReference>
<dbReference type="GO" id="GO:0005737">
    <property type="term" value="C:cytoplasm"/>
    <property type="evidence" value="ECO:0007669"/>
    <property type="project" value="UniProtKB-SubCell"/>
</dbReference>
<dbReference type="GO" id="GO:0005524">
    <property type="term" value="F:ATP binding"/>
    <property type="evidence" value="ECO:0007669"/>
    <property type="project" value="UniProtKB-UniRule"/>
</dbReference>
<dbReference type="GO" id="GO:0140662">
    <property type="term" value="F:ATP-dependent protein folding chaperone"/>
    <property type="evidence" value="ECO:0007669"/>
    <property type="project" value="InterPro"/>
</dbReference>
<dbReference type="GO" id="GO:0016853">
    <property type="term" value="F:isomerase activity"/>
    <property type="evidence" value="ECO:0007669"/>
    <property type="project" value="UniProtKB-KW"/>
</dbReference>
<dbReference type="GO" id="GO:0051082">
    <property type="term" value="F:unfolded protein binding"/>
    <property type="evidence" value="ECO:0007669"/>
    <property type="project" value="UniProtKB-UniRule"/>
</dbReference>
<dbReference type="GO" id="GO:0042026">
    <property type="term" value="P:protein refolding"/>
    <property type="evidence" value="ECO:0007669"/>
    <property type="project" value="UniProtKB-UniRule"/>
</dbReference>
<dbReference type="CDD" id="cd03344">
    <property type="entry name" value="GroEL"/>
    <property type="match status" value="1"/>
</dbReference>
<dbReference type="FunFam" id="3.50.7.10:FF:000001">
    <property type="entry name" value="60 kDa chaperonin"/>
    <property type="match status" value="1"/>
</dbReference>
<dbReference type="Gene3D" id="3.50.7.10">
    <property type="entry name" value="GroEL"/>
    <property type="match status" value="1"/>
</dbReference>
<dbReference type="Gene3D" id="1.10.560.10">
    <property type="entry name" value="GroEL-like equatorial domain"/>
    <property type="match status" value="1"/>
</dbReference>
<dbReference type="Gene3D" id="3.30.260.10">
    <property type="entry name" value="TCP-1-like chaperonin intermediate domain"/>
    <property type="match status" value="1"/>
</dbReference>
<dbReference type="HAMAP" id="MF_00600">
    <property type="entry name" value="CH60"/>
    <property type="match status" value="1"/>
</dbReference>
<dbReference type="InterPro" id="IPR018370">
    <property type="entry name" value="Chaperonin_Cpn60_CS"/>
</dbReference>
<dbReference type="InterPro" id="IPR001844">
    <property type="entry name" value="Cpn60/GroEL"/>
</dbReference>
<dbReference type="InterPro" id="IPR002423">
    <property type="entry name" value="Cpn60/GroEL/TCP-1"/>
</dbReference>
<dbReference type="InterPro" id="IPR027409">
    <property type="entry name" value="GroEL-like_apical_dom_sf"/>
</dbReference>
<dbReference type="InterPro" id="IPR027413">
    <property type="entry name" value="GROEL-like_equatorial_sf"/>
</dbReference>
<dbReference type="InterPro" id="IPR027410">
    <property type="entry name" value="TCP-1-like_intermed_sf"/>
</dbReference>
<dbReference type="NCBIfam" id="TIGR02348">
    <property type="entry name" value="GroEL"/>
    <property type="match status" value="1"/>
</dbReference>
<dbReference type="NCBIfam" id="NF000592">
    <property type="entry name" value="PRK00013.1"/>
    <property type="match status" value="1"/>
</dbReference>
<dbReference type="NCBIfam" id="NF009487">
    <property type="entry name" value="PRK12849.1"/>
    <property type="match status" value="1"/>
</dbReference>
<dbReference type="NCBIfam" id="NF009488">
    <property type="entry name" value="PRK12850.1"/>
    <property type="match status" value="1"/>
</dbReference>
<dbReference type="NCBIfam" id="NF009489">
    <property type="entry name" value="PRK12851.1"/>
    <property type="match status" value="1"/>
</dbReference>
<dbReference type="PANTHER" id="PTHR45633">
    <property type="entry name" value="60 KDA HEAT SHOCK PROTEIN, MITOCHONDRIAL"/>
    <property type="match status" value="1"/>
</dbReference>
<dbReference type="Pfam" id="PF00118">
    <property type="entry name" value="Cpn60_TCP1"/>
    <property type="match status" value="1"/>
</dbReference>
<dbReference type="PRINTS" id="PR00298">
    <property type="entry name" value="CHAPERONIN60"/>
</dbReference>
<dbReference type="SUPFAM" id="SSF52029">
    <property type="entry name" value="GroEL apical domain-like"/>
    <property type="match status" value="1"/>
</dbReference>
<dbReference type="SUPFAM" id="SSF48592">
    <property type="entry name" value="GroEL equatorial domain-like"/>
    <property type="match status" value="1"/>
</dbReference>
<dbReference type="SUPFAM" id="SSF54849">
    <property type="entry name" value="GroEL-intermediate domain like"/>
    <property type="match status" value="1"/>
</dbReference>
<dbReference type="PROSITE" id="PS00296">
    <property type="entry name" value="CHAPERONINS_CPN60"/>
    <property type="match status" value="1"/>
</dbReference>
<gene>
    <name evidence="1" type="primary">groEL</name>
    <name evidence="1" type="synonym">groL</name>
    <name type="ordered locus">EUBREC_2270</name>
</gene>
<accession>C4ZD46</accession>
<proteinExistence type="inferred from homology"/>
<organism>
    <name type="scientific">Agathobacter rectalis (strain ATCC 33656 / DSM 3377 / JCM 17463 / KCTC 5835 / VPI 0990)</name>
    <name type="common">Eubacterium rectale</name>
    <dbReference type="NCBI Taxonomy" id="515619"/>
    <lineage>
        <taxon>Bacteria</taxon>
        <taxon>Bacillati</taxon>
        <taxon>Bacillota</taxon>
        <taxon>Clostridia</taxon>
        <taxon>Lachnospirales</taxon>
        <taxon>Lachnospiraceae</taxon>
        <taxon>Agathobacter</taxon>
    </lineage>
</organism>
<protein>
    <recommendedName>
        <fullName evidence="1">Chaperonin GroEL</fullName>
        <ecNumber evidence="1">5.6.1.7</ecNumber>
    </recommendedName>
    <alternativeName>
        <fullName evidence="1">60 kDa chaperonin</fullName>
    </alternativeName>
    <alternativeName>
        <fullName evidence="1">Chaperonin-60</fullName>
        <shortName evidence="1">Cpn60</shortName>
    </alternativeName>
</protein>
<feature type="chain" id="PRO_1000212198" description="Chaperonin GroEL">
    <location>
        <begin position="1"/>
        <end position="541"/>
    </location>
</feature>
<feature type="binding site" evidence="1">
    <location>
        <begin position="29"/>
        <end position="32"/>
    </location>
    <ligand>
        <name>ATP</name>
        <dbReference type="ChEBI" id="CHEBI:30616"/>
    </ligand>
</feature>
<feature type="binding site" evidence="1">
    <location>
        <begin position="86"/>
        <end position="90"/>
    </location>
    <ligand>
        <name>ATP</name>
        <dbReference type="ChEBI" id="CHEBI:30616"/>
    </ligand>
</feature>
<feature type="binding site" evidence="1">
    <location>
        <position position="413"/>
    </location>
    <ligand>
        <name>ATP</name>
        <dbReference type="ChEBI" id="CHEBI:30616"/>
    </ligand>
</feature>
<feature type="binding site" evidence="1">
    <location>
        <begin position="478"/>
        <end position="480"/>
    </location>
    <ligand>
        <name>ATP</name>
        <dbReference type="ChEBI" id="CHEBI:30616"/>
    </ligand>
</feature>
<feature type="binding site" evidence="1">
    <location>
        <position position="494"/>
    </location>
    <ligand>
        <name>ATP</name>
        <dbReference type="ChEBI" id="CHEBI:30616"/>
    </ligand>
</feature>
<comment type="function">
    <text evidence="1">Together with its co-chaperonin GroES, plays an essential role in assisting protein folding. The GroEL-GroES system forms a nano-cage that allows encapsulation of the non-native substrate proteins and provides a physical environment optimized to promote and accelerate protein folding.</text>
</comment>
<comment type="catalytic activity">
    <reaction evidence="1">
        <text>ATP + H2O + a folded polypeptide = ADP + phosphate + an unfolded polypeptide.</text>
        <dbReference type="EC" id="5.6.1.7"/>
    </reaction>
</comment>
<comment type="subunit">
    <text evidence="1">Forms a cylinder of 14 subunits composed of two heptameric rings stacked back-to-back. Interacts with the co-chaperonin GroES.</text>
</comment>
<comment type="subcellular location">
    <subcellularLocation>
        <location evidence="1">Cytoplasm</location>
    </subcellularLocation>
</comment>
<comment type="similarity">
    <text evidence="1">Belongs to the chaperonin (HSP60) family.</text>
</comment>
<sequence length="541" mass="57128">MAKEIKYGSEARAALGAGVDKLANTVRVTLGPKGRNVVLDKSYGAPLITNDGVTIAKEVELEDAFENMGAQLVKEVATKTNDVAGDGTTTATVLTQAMVQEGMKNLEAGANPIVLRRGMKKATDKAVEALKDMSQKVKGKEQIAKVAAISAGDEEVGNLVADAMEKVTNDGVITIEESKTMQTELDLVEGMQFDRGYLSAYMCTDMDKMEAVLDDPYILITDKKISNIQDILPLLEKIVQAGARLLIIAEDVEGEALTTLIVNKLRGTFNVVAVKAPGYGDRRKAMLEDIAILTGGQVISSDLGLELKDTTIDMLGRAKSVKVQKENTVIVDGAGDKDAIAGRVSQIRGQIDETTSEFDKEKLQERLAKMAGGVAVIRVGAATETEMKEAKLRMEDALNATRAAVEEGIIAGGGSAYIHASKKVAELVDTLEGDEKTGAKVILKALEAPLYYIAANAGLEGAVIINKVKESAPGTGFNAATEEYVDMVDNGILDPVKVTRSALQNATSVASTLLTTESAVATIKEDTPAMPAGAGAGMGMM</sequence>
<reference key="1">
    <citation type="journal article" date="2009" name="Proc. Natl. Acad. Sci. U.S.A.">
        <title>Characterizing a model human gut microbiota composed of members of its two dominant bacterial phyla.</title>
        <authorList>
            <person name="Mahowald M.A."/>
            <person name="Rey F.E."/>
            <person name="Seedorf H."/>
            <person name="Turnbaugh P.J."/>
            <person name="Fulton R.S."/>
            <person name="Wollam A."/>
            <person name="Shah N."/>
            <person name="Wang C."/>
            <person name="Magrini V."/>
            <person name="Wilson R.K."/>
            <person name="Cantarel B.L."/>
            <person name="Coutinho P.M."/>
            <person name="Henrissat B."/>
            <person name="Crock L.W."/>
            <person name="Russell A."/>
            <person name="Verberkmoes N.C."/>
            <person name="Hettich R.L."/>
            <person name="Gordon J.I."/>
        </authorList>
    </citation>
    <scope>NUCLEOTIDE SEQUENCE [LARGE SCALE GENOMIC DNA]</scope>
    <source>
        <strain>ATCC 33656 / DSM 3377 / JCM 17463 / KCTC 5835 / LMG 30912 / VPI 0990</strain>
    </source>
</reference>